<accession>Q8KAM3</accession>
<name>RS18_CHLTE</name>
<dbReference type="EMBL" id="AE006470">
    <property type="protein sequence ID" value="AAM73349.1"/>
    <property type="molecule type" value="Genomic_DNA"/>
</dbReference>
<dbReference type="RefSeq" id="NP_663007.1">
    <property type="nucleotide sequence ID" value="NC_002932.3"/>
</dbReference>
<dbReference type="SMR" id="Q8KAM3"/>
<dbReference type="STRING" id="194439.CT2133"/>
<dbReference type="EnsemblBacteria" id="AAM73349">
    <property type="protein sequence ID" value="AAM73349"/>
    <property type="gene ID" value="CT2133"/>
</dbReference>
<dbReference type="KEGG" id="cte:CT2133"/>
<dbReference type="PATRIC" id="fig|194439.7.peg.1934"/>
<dbReference type="eggNOG" id="COG0238">
    <property type="taxonomic scope" value="Bacteria"/>
</dbReference>
<dbReference type="HOGENOM" id="CLU_148710_0_3_10"/>
<dbReference type="OrthoDB" id="9812008at2"/>
<dbReference type="Proteomes" id="UP000001007">
    <property type="component" value="Chromosome"/>
</dbReference>
<dbReference type="GO" id="GO:0022627">
    <property type="term" value="C:cytosolic small ribosomal subunit"/>
    <property type="evidence" value="ECO:0007669"/>
    <property type="project" value="TreeGrafter"/>
</dbReference>
<dbReference type="GO" id="GO:0070181">
    <property type="term" value="F:small ribosomal subunit rRNA binding"/>
    <property type="evidence" value="ECO:0007669"/>
    <property type="project" value="TreeGrafter"/>
</dbReference>
<dbReference type="GO" id="GO:0003735">
    <property type="term" value="F:structural constituent of ribosome"/>
    <property type="evidence" value="ECO:0007669"/>
    <property type="project" value="InterPro"/>
</dbReference>
<dbReference type="GO" id="GO:0006412">
    <property type="term" value="P:translation"/>
    <property type="evidence" value="ECO:0007669"/>
    <property type="project" value="UniProtKB-UniRule"/>
</dbReference>
<dbReference type="Gene3D" id="4.10.640.10">
    <property type="entry name" value="Ribosomal protein S18"/>
    <property type="match status" value="1"/>
</dbReference>
<dbReference type="HAMAP" id="MF_00270">
    <property type="entry name" value="Ribosomal_bS18"/>
    <property type="match status" value="1"/>
</dbReference>
<dbReference type="InterPro" id="IPR001648">
    <property type="entry name" value="Ribosomal_bS18"/>
</dbReference>
<dbReference type="InterPro" id="IPR036870">
    <property type="entry name" value="Ribosomal_bS18_sf"/>
</dbReference>
<dbReference type="NCBIfam" id="TIGR00165">
    <property type="entry name" value="S18"/>
    <property type="match status" value="1"/>
</dbReference>
<dbReference type="PANTHER" id="PTHR13479">
    <property type="entry name" value="30S RIBOSOMAL PROTEIN S18"/>
    <property type="match status" value="1"/>
</dbReference>
<dbReference type="PANTHER" id="PTHR13479:SF40">
    <property type="entry name" value="SMALL RIBOSOMAL SUBUNIT PROTEIN BS18M"/>
    <property type="match status" value="1"/>
</dbReference>
<dbReference type="Pfam" id="PF01084">
    <property type="entry name" value="Ribosomal_S18"/>
    <property type="match status" value="1"/>
</dbReference>
<dbReference type="PRINTS" id="PR00974">
    <property type="entry name" value="RIBOSOMALS18"/>
</dbReference>
<dbReference type="SUPFAM" id="SSF46911">
    <property type="entry name" value="Ribosomal protein S18"/>
    <property type="match status" value="1"/>
</dbReference>
<gene>
    <name evidence="1" type="primary">rpsR</name>
    <name type="ordered locus">CT2133</name>
</gene>
<comment type="function">
    <text evidence="1">Binds as a heterodimer with protein bS6 to the central domain of the 16S rRNA, where it helps stabilize the platform of the 30S subunit.</text>
</comment>
<comment type="subunit">
    <text evidence="1">Part of the 30S ribosomal subunit. Forms a tight heterodimer with protein bS6.</text>
</comment>
<comment type="similarity">
    <text evidence="1">Belongs to the bacterial ribosomal protein bS18 family.</text>
</comment>
<organism>
    <name type="scientific">Chlorobaculum tepidum (strain ATCC 49652 / DSM 12025 / NBRC 103806 / TLS)</name>
    <name type="common">Chlorobium tepidum</name>
    <dbReference type="NCBI Taxonomy" id="194439"/>
    <lineage>
        <taxon>Bacteria</taxon>
        <taxon>Pseudomonadati</taxon>
        <taxon>Chlorobiota</taxon>
        <taxon>Chlorobiia</taxon>
        <taxon>Chlorobiales</taxon>
        <taxon>Chlorobiaceae</taxon>
        <taxon>Chlorobaculum</taxon>
    </lineage>
</organism>
<proteinExistence type="inferred from homology"/>
<evidence type="ECO:0000255" key="1">
    <source>
        <dbReference type="HAMAP-Rule" id="MF_00270"/>
    </source>
</evidence>
<evidence type="ECO:0000305" key="2"/>
<keyword id="KW-1185">Reference proteome</keyword>
<keyword id="KW-0687">Ribonucleoprotein</keyword>
<keyword id="KW-0689">Ribosomal protein</keyword>
<keyword id="KW-0694">RNA-binding</keyword>
<keyword id="KW-0699">rRNA-binding</keyword>
<reference key="1">
    <citation type="journal article" date="2002" name="Proc. Natl. Acad. Sci. U.S.A.">
        <title>The complete genome sequence of Chlorobium tepidum TLS, a photosynthetic, anaerobic, green-sulfur bacterium.</title>
        <authorList>
            <person name="Eisen J.A."/>
            <person name="Nelson K.E."/>
            <person name="Paulsen I.T."/>
            <person name="Heidelberg J.F."/>
            <person name="Wu M."/>
            <person name="Dodson R.J."/>
            <person name="DeBoy R.T."/>
            <person name="Gwinn M.L."/>
            <person name="Nelson W.C."/>
            <person name="Haft D.H."/>
            <person name="Hickey E.K."/>
            <person name="Peterson J.D."/>
            <person name="Durkin A.S."/>
            <person name="Kolonay J.F."/>
            <person name="Yang F."/>
            <person name="Holt I.E."/>
            <person name="Umayam L.A."/>
            <person name="Mason T.M."/>
            <person name="Brenner M."/>
            <person name="Shea T.P."/>
            <person name="Parksey D.S."/>
            <person name="Nierman W.C."/>
            <person name="Feldblyum T.V."/>
            <person name="Hansen C.L."/>
            <person name="Craven M.B."/>
            <person name="Radune D."/>
            <person name="Vamathevan J.J."/>
            <person name="Khouri H.M."/>
            <person name="White O."/>
            <person name="Gruber T.M."/>
            <person name="Ketchum K.A."/>
            <person name="Venter J.C."/>
            <person name="Tettelin H."/>
            <person name="Bryant D.A."/>
            <person name="Fraser C.M."/>
        </authorList>
    </citation>
    <scope>NUCLEOTIDE SEQUENCE [LARGE SCALE GENOMIC DNA]</scope>
    <source>
        <strain>ATCC 49652 / DSM 12025 / NBRC 103806 / TLS</strain>
    </source>
</reference>
<protein>
    <recommendedName>
        <fullName evidence="1">Small ribosomal subunit protein bS18</fullName>
    </recommendedName>
    <alternativeName>
        <fullName evidence="2">30S ribosomal protein S18</fullName>
    </alternativeName>
</protein>
<feature type="chain" id="PRO_0000111141" description="Small ribosomal subunit protein bS18">
    <location>
        <begin position="1"/>
        <end position="74"/>
    </location>
</feature>
<sequence>MSNALASKKKVSKNQVVFFDYRDERKLKRFINDQGKIIPRRITGLSAKEQSLLTHSIKWARFLAIIPYVADEYK</sequence>